<proteinExistence type="evidence at protein level"/>
<evidence type="ECO:0000255" key="1"/>
<evidence type="ECO:0000269" key="2">
    <source>
    </source>
</evidence>
<evidence type="ECO:0000305" key="3"/>
<comment type="function">
    <text evidence="2">Primate-specific protein involved in cortical expansion and folding in the developing neocortex. May drive neural progenitor proliferation through nuclear translocation of IQGAP1, which in turn promotes G1/S cell cycle transitions.</text>
</comment>
<comment type="subunit">
    <text evidence="2">Interacts with IQGAP1; this interaction promotes phosphorylation and nuclear translocation of IQGAP1.</text>
</comment>
<comment type="interaction">
    <interactant intactId="EBI-8638294">
        <id>Q9NUH8</id>
    </interactant>
    <interactant intactId="EBI-348517">
        <id>O95870</id>
        <label>ABHD16A</label>
    </interactant>
    <organismsDiffer>false</organismsDiffer>
    <experiments>3</experiments>
</comment>
<comment type="interaction">
    <interactant intactId="EBI-8638294">
        <id>Q9NUH8</id>
    </interactant>
    <interactant intactId="EBI-2813554">
        <id>Q8WTS1</id>
        <label>ABHD5</label>
    </interactant>
    <organismsDiffer>false</organismsDiffer>
    <experiments>3</experiments>
</comment>
<comment type="interaction">
    <interactant intactId="EBI-8638294">
        <id>Q9NUH8</id>
    </interactant>
    <interactant intactId="EBI-2876927">
        <id>Q9ULC5</id>
        <label>ACSL5</label>
    </interactant>
    <organismsDiffer>false</organismsDiffer>
    <experiments>3</experiments>
</comment>
<comment type="interaction">
    <interactant intactId="EBI-8638294">
        <id>Q9NUH8</id>
    </interactant>
    <interactant intactId="EBI-10225815">
        <id>Q08AM2</id>
        <label>ADAM33</label>
    </interactant>
    <organismsDiffer>false</organismsDiffer>
    <experiments>3</experiments>
</comment>
<comment type="interaction">
    <interactant intactId="EBI-8638294">
        <id>Q9NUH8</id>
    </interactant>
    <interactant intactId="EBI-2803601">
        <id>Q9NRZ7</id>
        <label>AGPAT3</label>
    </interactant>
    <organismsDiffer>false</organismsDiffer>
    <experiments>3</experiments>
</comment>
<comment type="interaction">
    <interactant intactId="EBI-8638294">
        <id>Q9NUH8</id>
    </interactant>
    <interactant intactId="EBI-1754287">
        <id>Q9NRZ5</id>
        <label>AGPAT4</label>
    </interactant>
    <organismsDiffer>false</organismsDiffer>
    <experiments>3</experiments>
</comment>
<comment type="interaction">
    <interactant intactId="EBI-8638294">
        <id>Q9NUH8</id>
    </interactant>
    <interactant intactId="EBI-3925742">
        <id>Q8TD06</id>
        <label>AGR3</label>
    </interactant>
    <organismsDiffer>false</organismsDiffer>
    <experiments>3</experiments>
</comment>
<comment type="interaction">
    <interactant intactId="EBI-8638294">
        <id>Q9NUH8</id>
    </interactant>
    <interactant intactId="EBI-18302142">
        <id>P55056</id>
        <label>APOC4</label>
    </interactant>
    <organismsDiffer>false</organismsDiffer>
    <experiments>3</experiments>
</comment>
<comment type="interaction">
    <interactant intactId="EBI-8638294">
        <id>Q9NUH8</id>
    </interactant>
    <interactant intactId="EBI-714543">
        <id>Q15041</id>
        <label>ARL6IP1</label>
    </interactant>
    <organismsDiffer>false</organismsDiffer>
    <experiments>3</experiments>
</comment>
<comment type="interaction">
    <interactant intactId="EBI-8638294">
        <id>Q9NUH8</id>
    </interactant>
    <interactant intactId="EBI-718376">
        <id>Q9NVJ2</id>
        <label>ARL8B</label>
    </interactant>
    <organismsDiffer>false</organismsDiffer>
    <experiments>3</experiments>
</comment>
<comment type="interaction">
    <interactant intactId="EBI-8638294">
        <id>Q9NUH8</id>
    </interactant>
    <interactant intactId="EBI-11724186">
        <id>Q9H2C2</id>
        <label>ARV1</label>
    </interactant>
    <organismsDiffer>false</organismsDiffer>
    <experiments>3</experiments>
</comment>
<comment type="interaction">
    <interactant intactId="EBI-8638294">
        <id>Q9NUH8</id>
    </interactant>
    <interactant intactId="EBI-12069500">
        <id>Q9HD20-3</id>
        <label>ATP13A1</label>
    </interactant>
    <organismsDiffer>false</organismsDiffer>
    <experiments>3</experiments>
</comment>
<comment type="interaction">
    <interactant intactId="EBI-8638294">
        <id>Q9NUH8</id>
    </interactant>
    <interactant intactId="EBI-10319970">
        <id>Q9UBV7</id>
        <label>B4GALT7</label>
    </interactant>
    <organismsDiffer>false</organismsDiffer>
    <experiments>3</experiments>
</comment>
<comment type="interaction">
    <interactant intactId="EBI-8638294">
        <id>Q9NUH8</id>
    </interactant>
    <interactant intactId="EBI-700794">
        <id>Q13323</id>
        <label>BIK</label>
    </interactant>
    <organismsDiffer>false</organismsDiffer>
    <experiments>3</experiments>
</comment>
<comment type="interaction">
    <interactant intactId="EBI-8638294">
        <id>Q9NUH8</id>
    </interactant>
    <interactant intactId="EBI-3895726">
        <id>P62952</id>
        <label>BLCAP</label>
    </interactant>
    <organismsDiffer>false</organismsDiffer>
    <experiments>3</experiments>
</comment>
<comment type="interaction">
    <interactant intactId="EBI-8638294">
        <id>Q9NUH8</id>
    </interactant>
    <interactant intactId="EBI-3922513">
        <id>O95393</id>
        <label>BMP10</label>
    </interactant>
    <organismsDiffer>false</organismsDiffer>
    <experiments>3</experiments>
</comment>
<comment type="interaction">
    <interactant intactId="EBI-8638294">
        <id>Q9NUH8</id>
    </interactant>
    <interactant intactId="EBI-8648738">
        <id>Q8WVV5</id>
        <label>BTN2A2</label>
    </interactant>
    <organismsDiffer>false</organismsDiffer>
    <experiments>3</experiments>
</comment>
<comment type="interaction">
    <interactant intactId="EBI-8638294">
        <id>Q9NUH8</id>
    </interactant>
    <interactant intactId="EBI-13381098">
        <id>Q8IYJ2-2</id>
        <label>C10orf67</label>
    </interactant>
    <organismsDiffer>false</organismsDiffer>
    <experiments>3</experiments>
</comment>
<comment type="interaction">
    <interactant intactId="EBI-8638294">
        <id>Q9NUH8</id>
    </interactant>
    <interactant intactId="EBI-12822627">
        <id>O14523</id>
        <label>C2CD2L</label>
    </interactant>
    <organismsDiffer>false</organismsDiffer>
    <experiments>3</experiments>
</comment>
<comment type="interaction">
    <interactant intactId="EBI-8638294">
        <id>Q9NUH8</id>
    </interactant>
    <interactant intactId="EBI-2873970">
        <id>P13236</id>
        <label>CCL4</label>
    </interactant>
    <organismsDiffer>false</organismsDiffer>
    <experiments>3</experiments>
</comment>
<comment type="interaction">
    <interactant intactId="EBI-8638294">
        <id>Q9NUH8</id>
    </interactant>
    <interactant intactId="EBI-7797864">
        <id>P11912</id>
        <label>CD79A</label>
    </interactant>
    <organismsDiffer>false</organismsDiffer>
    <experiments>3</experiments>
</comment>
<comment type="interaction">
    <interactant intactId="EBI-8638294">
        <id>Q9NUH8</id>
    </interactant>
    <interactant intactId="EBI-1237183">
        <id>Q9Y6K0</id>
        <label>CEPT1</label>
    </interactant>
    <organismsDiffer>false</organismsDiffer>
    <experiments>3</experiments>
</comment>
<comment type="interaction">
    <interactant intactId="EBI-8638294">
        <id>Q9NUH8</id>
    </interactant>
    <interactant intactId="EBI-11579371">
        <id>Q9BXR6</id>
        <label>CFHR5</label>
    </interactant>
    <organismsDiffer>false</organismsDiffer>
    <experiments>3</experiments>
</comment>
<comment type="interaction">
    <interactant intactId="EBI-8638294">
        <id>Q9NUH8</id>
    </interactant>
    <interactant intactId="EBI-7062247">
        <id>Q9UHD4</id>
        <label>CIDEB</label>
    </interactant>
    <organismsDiffer>false</organismsDiffer>
    <experiments>3</experiments>
</comment>
<comment type="interaction">
    <interactant intactId="EBI-8638294">
        <id>Q9NUH8</id>
    </interactant>
    <interactant intactId="EBI-13372810">
        <id>P78369</id>
        <label>CLDN10</label>
    </interactant>
    <organismsDiffer>false</organismsDiffer>
    <experiments>3</experiments>
</comment>
<comment type="interaction">
    <interactant intactId="EBI-8638294">
        <id>Q9NUH8</id>
    </interactant>
    <interactant intactId="EBI-11959453">
        <id>Q8NHS1</id>
        <label>CLDND2</label>
    </interactant>
    <organismsDiffer>false</organismsDiffer>
    <experiments>3</experiments>
</comment>
<comment type="interaction">
    <interactant intactId="EBI-8638294">
        <id>Q9NUH8</id>
    </interactant>
    <interactant intactId="EBI-11522780">
        <id>Q96DZ9-2</id>
        <label>CMTM5</label>
    </interactant>
    <organismsDiffer>false</organismsDiffer>
    <experiments>3</experiments>
</comment>
<comment type="interaction">
    <interactant intactId="EBI-8638294">
        <id>Q9NUH8</id>
    </interactant>
    <interactant intactId="EBI-7868911">
        <id>Q8IZV2</id>
        <label>CMTM8</label>
    </interactant>
    <organismsDiffer>false</organismsDiffer>
    <experiments>3</experiments>
</comment>
<comment type="interaction">
    <interactant intactId="EBI-8638294">
        <id>Q9NUH8</id>
    </interactant>
    <interactant intactId="EBI-12815321">
        <id>Q6PI25</id>
        <label>CNIH2</label>
    </interactant>
    <organismsDiffer>false</organismsDiffer>
    <experiments>3</experiments>
</comment>
<comment type="interaction">
    <interactant intactId="EBI-8638294">
        <id>Q9NUH8</id>
    </interactant>
    <interactant intactId="EBI-12208021">
        <id>Q8TBE1</id>
        <label>CNIH3</label>
    </interactant>
    <organismsDiffer>false</organismsDiffer>
    <experiments>3</experiments>
</comment>
<comment type="interaction">
    <interactant intactId="EBI-8638294">
        <id>Q9NUH8</id>
    </interactant>
    <interactant intactId="EBI-1044341">
        <id>Q9P003</id>
        <label>CNIH4</label>
    </interactant>
    <organismsDiffer>false</organismsDiffer>
    <experiments>3</experiments>
</comment>
<comment type="interaction">
    <interactant intactId="EBI-8638294">
        <id>Q9NUH8</id>
    </interactant>
    <interactant intactId="EBI-372265">
        <id>P21964</id>
        <label>COMT</label>
    </interactant>
    <organismsDiffer>false</organismsDiffer>
    <experiments>3</experiments>
</comment>
<comment type="interaction">
    <interactant intactId="EBI-8638294">
        <id>Q9NUH8</id>
    </interactant>
    <interactant intactId="EBI-18013275">
        <id>Q7Z7G2</id>
        <label>CPLX4</label>
    </interactant>
    <organismsDiffer>false</organismsDiffer>
    <experiments>3</experiments>
</comment>
<comment type="interaction">
    <interactant intactId="EBI-8638294">
        <id>Q9NUH8</id>
    </interactant>
    <interactant intactId="EBI-6942903">
        <id>Q96BA8</id>
        <label>CREB3L1</label>
    </interactant>
    <organismsDiffer>false</organismsDiffer>
    <experiments>3</experiments>
</comment>
<comment type="interaction">
    <interactant intactId="EBI-8638294">
        <id>Q9NUH8</id>
    </interactant>
    <interactant intactId="EBI-8646596">
        <id>P49447</id>
        <label>CYB561</label>
    </interactant>
    <organismsDiffer>false</organismsDiffer>
    <experiments>3</experiments>
</comment>
<comment type="interaction">
    <interactant intactId="EBI-8638294">
        <id>Q9NUH8</id>
    </interactant>
    <interactant intactId="EBI-1046040">
        <id>P00387</id>
        <label>CYB5R3</label>
    </interactant>
    <organismsDiffer>false</organismsDiffer>
    <experiments>3</experiments>
</comment>
<comment type="interaction">
    <interactant intactId="EBI-8638294">
        <id>Q9NUH8</id>
    </interactant>
    <interactant intactId="EBI-12074168">
        <id>P81534</id>
        <label>DEFB103B</label>
    </interactant>
    <organismsDiffer>false</organismsDiffer>
    <experiments>3</experiments>
</comment>
<comment type="interaction">
    <interactant intactId="EBI-8638294">
        <id>Q9NUH8</id>
    </interactant>
    <interactant intactId="EBI-12831978">
        <id>Q6ZPD8</id>
        <label>DGAT2L6</label>
    </interactant>
    <organismsDiffer>false</organismsDiffer>
    <experiments>3</experiments>
</comment>
<comment type="interaction">
    <interactant intactId="EBI-8638294">
        <id>Q9NUH8</id>
    </interactant>
    <interactant intactId="EBI-3923585">
        <id>Q8N5I4</id>
        <label>DHRSX</label>
    </interactant>
    <organismsDiffer>false</organismsDiffer>
    <experiments>3</experiments>
</comment>
<comment type="interaction">
    <interactant intactId="EBI-8638294">
        <id>Q9NUH8</id>
    </interactant>
    <interactant intactId="EBI-3915253">
        <id>Q15125</id>
        <label>EBP</label>
    </interactant>
    <organismsDiffer>false</organismsDiffer>
    <experiments>3</experiments>
</comment>
<comment type="interaction">
    <interactant intactId="EBI-8638294">
        <id>Q9NUH8</id>
    </interactant>
    <interactant intactId="EBI-2339413">
        <id>O14681</id>
        <label>EI24</label>
    </interactant>
    <organismsDiffer>false</organismsDiffer>
    <experiments>3</experiments>
</comment>
<comment type="interaction">
    <interactant intactId="EBI-8638294">
        <id>Q9NUH8</id>
    </interactant>
    <interactant intactId="EBI-2820492">
        <id>Q9BV81</id>
        <label>EMC6</label>
    </interactant>
    <organismsDiffer>false</organismsDiffer>
    <experiments>3</experiments>
</comment>
<comment type="interaction">
    <interactant intactId="EBI-8638294">
        <id>Q9NUH8</id>
    </interactant>
    <interactant intactId="EBI-17962164">
        <id>Q8IUS5</id>
        <label>EPHX4</label>
    </interactant>
    <organismsDiffer>false</organismsDiffer>
    <experiments>3</experiments>
</comment>
<comment type="interaction">
    <interactant intactId="EBI-8638294">
        <id>Q9NUH8</id>
    </interactant>
    <interactant intactId="EBI-781551">
        <id>Q9Y282</id>
        <label>ERGIC3</label>
    </interactant>
    <organismsDiffer>false</organismsDiffer>
    <experiments>3</experiments>
</comment>
<comment type="interaction">
    <interactant intactId="EBI-8638294">
        <id>Q9NUH8</id>
    </interactant>
    <interactant intactId="EBI-1760167">
        <id>Q92935</id>
        <label>EXTL1</label>
    </interactant>
    <organismsDiffer>false</organismsDiffer>
    <experiments>3</experiments>
</comment>
<comment type="interaction">
    <interactant intactId="EBI-8638294">
        <id>Q9NUH8</id>
    </interactant>
    <interactant intactId="EBI-11337888">
        <id>Q7L5A8</id>
        <label>FA2H</label>
    </interactant>
    <organismsDiffer>false</organismsDiffer>
    <experiments>3</experiments>
</comment>
<comment type="interaction">
    <interactant intactId="EBI-8638294">
        <id>Q9NUH8</id>
    </interactant>
    <interactant intactId="EBI-3943864">
        <id>Q8N9I5</id>
        <label>FADS6</label>
    </interactant>
    <organismsDiffer>false</organismsDiffer>
    <experiments>3</experiments>
</comment>
<comment type="interaction">
    <interactant intactId="EBI-8638294">
        <id>Q9NUH8</id>
    </interactant>
    <interactant intactId="EBI-18304435">
        <id>Q5JX71</id>
        <label>FAM209A</label>
    </interactant>
    <organismsDiffer>false</organismsDiffer>
    <experiments>3</experiments>
</comment>
<comment type="interaction">
    <interactant intactId="EBI-8638294">
        <id>Q9NUH8</id>
    </interactant>
    <interactant intactId="EBI-3385283">
        <id>Q9Y3D6</id>
        <label>FIS1</label>
    </interactant>
    <organismsDiffer>false</organismsDiffer>
    <experiments>3</experiments>
</comment>
<comment type="interaction">
    <interactant intactId="EBI-8638294">
        <id>Q9NUH8</id>
    </interactant>
    <interactant intactId="EBI-724839">
        <id>Q14318</id>
        <label>FKBP8</label>
    </interactant>
    <organismsDiffer>false</organismsDiffer>
    <experiments>3</experiments>
</comment>
<comment type="interaction">
    <interactant intactId="EBI-8638294">
        <id>Q9NUH8</id>
    </interactant>
    <interactant intactId="EBI-11110431">
        <id>Q8TB36</id>
        <label>GDAP1</label>
    </interactant>
    <organismsDiffer>false</organismsDiffer>
    <experiments>3</experiments>
</comment>
<comment type="interaction">
    <interactant intactId="EBI-8638294">
        <id>Q9NUH8</id>
    </interactant>
    <interactant intactId="EBI-11991950">
        <id>Q8WWP7</id>
        <label>GIMAP1</label>
    </interactant>
    <organismsDiffer>false</organismsDiffer>
    <experiments>3</experiments>
</comment>
<comment type="interaction">
    <interactant intactId="EBI-8638294">
        <id>Q9NUH8</id>
    </interactant>
    <interactant intactId="EBI-13345167">
        <id>Q8TDT2</id>
        <label>GPR152</label>
    </interactant>
    <organismsDiffer>false</organismsDiffer>
    <experiments>3</experiments>
</comment>
<comment type="interaction">
    <interactant intactId="EBI-8638294">
        <id>Q9NUH8</id>
    </interactant>
    <interactant intactId="EBI-11721746">
        <id>Q8TED1</id>
        <label>GPX8</label>
    </interactant>
    <organismsDiffer>false</organismsDiffer>
    <experiments>3</experiments>
</comment>
<comment type="interaction">
    <interactant intactId="EBI-8638294">
        <id>Q9NUH8</id>
    </interactant>
    <interactant intactId="EBI-702665">
        <id>P02724</id>
        <label>GYPA</label>
    </interactant>
    <organismsDiffer>false</organismsDiffer>
    <experiments>3</experiments>
</comment>
<comment type="interaction">
    <interactant intactId="EBI-8638294">
        <id>Q9NUH8</id>
    </interactant>
    <interactant intactId="EBI-7797098">
        <id>P04921</id>
        <label>GYPC</label>
    </interactant>
    <organismsDiffer>false</organismsDiffer>
    <experiments>3</experiments>
</comment>
<comment type="interaction">
    <interactant intactId="EBI-8638294">
        <id>Q9NUH8</id>
    </interactant>
    <interactant intactId="EBI-7133736">
        <id>P07686</id>
        <label>HEXB</label>
    </interactant>
    <organismsDiffer>false</organismsDiffer>
    <experiments>3</experiments>
</comment>
<comment type="interaction">
    <interactant intactId="EBI-8638294">
        <id>Q9NUH8</id>
    </interactant>
    <interactant intactId="EBI-11427100">
        <id>P31937</id>
        <label>HIBADH</label>
    </interactant>
    <organismsDiffer>false</organismsDiffer>
    <experiments>3</experiments>
</comment>
<comment type="interaction">
    <interactant intactId="EBI-8638294">
        <id>Q9NUH8</id>
    </interactant>
    <interactant intactId="EBI-12809676">
        <id>A8MV81</id>
        <label>HIGD1C</label>
    </interactant>
    <organismsDiffer>false</organismsDiffer>
    <experiments>3</experiments>
</comment>
<comment type="interaction">
    <interactant intactId="EBI-8638294">
        <id>Q9NUH8</id>
    </interactant>
    <interactant intactId="EBI-2806151">
        <id>P09601</id>
        <label>HMOX1</label>
    </interactant>
    <organismsDiffer>false</organismsDiffer>
    <experiments>3</experiments>
</comment>
<comment type="interaction">
    <interactant intactId="EBI-8638294">
        <id>Q9NUH8</id>
    </interactant>
    <interactant intactId="EBI-712096">
        <id>P30519</id>
        <label>HMOX2</label>
    </interactant>
    <organismsDiffer>false</organismsDiffer>
    <experiments>3</experiments>
</comment>
<comment type="interaction">
    <interactant intactId="EBI-8638294">
        <id>Q9NUH8</id>
    </interactant>
    <interactant intactId="EBI-1052304">
        <id>Q8NBQ5</id>
        <label>HSD17B11</label>
    </interactant>
    <organismsDiffer>false</organismsDiffer>
    <experiments>3</experiments>
</comment>
<comment type="interaction">
    <interactant intactId="EBI-8638294">
        <id>Q9NUH8</id>
    </interactant>
    <interactant intactId="EBI-17426018">
        <id>P14060</id>
        <label>HSD3B1</label>
    </interactant>
    <organismsDiffer>false</organismsDiffer>
    <experiments>3</experiments>
</comment>
<comment type="interaction">
    <interactant intactId="EBI-8638294">
        <id>Q9NUH8</id>
    </interactant>
    <interactant intactId="EBI-725665">
        <id>Q9Y5U9</id>
        <label>IER3IP1</label>
    </interactant>
    <organismsDiffer>false</organismsDiffer>
    <experiments>3</experiments>
</comment>
<comment type="interaction">
    <interactant intactId="EBI-8638294">
        <id>Q9NUH8</id>
    </interactant>
    <interactant intactId="EBI-7932862">
        <id>Q01628</id>
        <label>IFITM3</label>
    </interactant>
    <organismsDiffer>false</organismsDiffer>
    <experiments>3</experiments>
</comment>
<comment type="interaction">
    <interactant intactId="EBI-8638294">
        <id>Q9NUH8</id>
    </interactant>
    <interactant intactId="EBI-8503746">
        <id>Q9Y5U4</id>
        <label>INSIG2</label>
    </interactant>
    <organismsDiffer>false</organismsDiffer>
    <experiments>3</experiments>
</comment>
<comment type="interaction">
    <interactant intactId="EBI-8638294">
        <id>Q9NUH8</id>
    </interactant>
    <interactant intactId="EBI-2568251">
        <id>P11215</id>
        <label>ITGAM</label>
    </interactant>
    <organismsDiffer>false</organismsDiffer>
    <experiments>3</experiments>
</comment>
<comment type="interaction">
    <interactant intactId="EBI-8638294">
        <id>Q9NUH8</id>
    </interactant>
    <interactant intactId="EBI-10266796">
        <id>Q8N5M9</id>
        <label>JAGN1</label>
    </interactant>
    <organismsDiffer>false</organismsDiffer>
    <experiments>3</experiments>
</comment>
<comment type="interaction">
    <interactant intactId="EBI-8638294">
        <id>Q9NUH8</id>
    </interactant>
    <interactant intactId="EBI-8286599">
        <id>Q09470</id>
        <label>KCNA1</label>
    </interactant>
    <organismsDiffer>false</organismsDiffer>
    <experiments>3</experiments>
</comment>
<comment type="interaction">
    <interactant intactId="EBI-8638294">
        <id>Q9NUH8</id>
    </interactant>
    <interactant intactId="EBI-3914675">
        <id>O00180</id>
        <label>KCNK1</label>
    </interactant>
    <organismsDiffer>false</organismsDiffer>
    <experiments>3</experiments>
</comment>
<comment type="interaction">
    <interactant intactId="EBI-8638294">
        <id>Q9NUH8</id>
    </interactant>
    <interactant intactId="EBI-750776">
        <id>O95214</id>
        <label>LEPROTL1</label>
    </interactant>
    <organismsDiffer>false</organismsDiffer>
    <experiments>3</experiments>
</comment>
<comment type="interaction">
    <interactant intactId="EBI-8638294">
        <id>Q9NUH8</id>
    </interactant>
    <interactant intactId="EBI-12033434">
        <id>Q9UBY5</id>
        <label>LPAR3</label>
    </interactant>
    <organismsDiffer>false</organismsDiffer>
    <experiments>3</experiments>
</comment>
<comment type="interaction">
    <interactant intactId="EBI-8638294">
        <id>Q9NUH8</id>
    </interactant>
    <interactant intactId="EBI-12082218">
        <id>Q9Y2L9-3</id>
        <label>LRCH1</label>
    </interactant>
    <organismsDiffer>false</organismsDiffer>
    <experiments>3</experiments>
</comment>
<comment type="interaction">
    <interactant intactId="EBI-8638294">
        <id>Q9NUH8</id>
    </interactant>
    <interactant intactId="EBI-944295">
        <id>Q969L2</id>
        <label>MAL2</label>
    </interactant>
    <organismsDiffer>false</organismsDiffer>
    <experiments>3</experiments>
</comment>
<comment type="interaction">
    <interactant intactId="EBI-8638294">
        <id>Q9NUH8</id>
    </interactant>
    <interactant intactId="EBI-2341610">
        <id>Q9NX47</id>
        <label>MARCHF5</label>
    </interactant>
    <organismsDiffer>false</organismsDiffer>
    <experiments>3</experiments>
</comment>
<comment type="interaction">
    <interactant intactId="EBI-8638294">
        <id>Q9NUH8</id>
    </interactant>
    <interactant intactId="EBI-16439278">
        <id>Q6FHY5</id>
        <label>MEOX2</label>
    </interactant>
    <organismsDiffer>false</organismsDiffer>
    <experiments>3</experiments>
</comment>
<comment type="interaction">
    <interactant intactId="EBI-8638294">
        <id>Q9NUH8</id>
    </interactant>
    <interactant intactId="EBI-17295698">
        <id>Q6NUT3-2</id>
        <label>MFSD12</label>
    </interactant>
    <organismsDiffer>false</organismsDiffer>
    <experiments>3</experiments>
</comment>
<comment type="interaction">
    <interactant intactId="EBI-8638294">
        <id>Q9NUH8</id>
    </interactant>
    <interactant intactId="EBI-3920969">
        <id>Q6N075</id>
        <label>MFSD5</label>
    </interactant>
    <organismsDiffer>false</organismsDiffer>
    <experiments>3</experiments>
</comment>
<comment type="interaction">
    <interactant intactId="EBI-8638294">
        <id>Q9NUH8</id>
    </interactant>
    <interactant intactId="EBI-2829774">
        <id>O43451</id>
        <label>MGAM</label>
    </interactant>
    <organismsDiffer>false</organismsDiffer>
    <experiments>3</experiments>
</comment>
<comment type="interaction">
    <interactant intactId="EBI-8638294">
        <id>Q9NUH8</id>
    </interactant>
    <interactant intactId="EBI-13349813">
        <id>Q8IY49-2</id>
        <label>MMD2</label>
    </interactant>
    <organismsDiffer>false</organismsDiffer>
    <experiments>3</experiments>
</comment>
<comment type="interaction">
    <interactant intactId="EBI-8638294">
        <id>Q9NUH8</id>
    </interactant>
    <interactant intactId="EBI-12070086">
        <id>Q5J8X5</id>
        <label>MS4A13</label>
    </interactant>
    <organismsDiffer>false</organismsDiffer>
    <experiments>3</experiments>
</comment>
<comment type="interaction">
    <interactant intactId="EBI-8638294">
        <id>Q9NUH8</id>
    </interactant>
    <interactant intactId="EBI-12820341">
        <id>Q96JQ5</id>
        <label>MS4A4A</label>
    </interactant>
    <organismsDiffer>false</organismsDiffer>
    <experiments>3</experiments>
</comment>
<comment type="interaction">
    <interactant intactId="EBI-8638294">
        <id>Q9NUH8</id>
    </interactant>
    <interactant intactId="EBI-2863634">
        <id>Q9UHE5</id>
        <label>NAT8</label>
    </interactant>
    <organismsDiffer>false</organismsDiffer>
    <experiments>3</experiments>
</comment>
<comment type="interaction">
    <interactant intactId="EBI-8638294">
        <id>Q9NUH8</id>
    </interactant>
    <interactant intactId="EBI-1246131">
        <id>O95167</id>
        <label>NDUFA3</label>
    </interactant>
    <organismsDiffer>false</organismsDiffer>
    <experiments>3</experiments>
</comment>
<comment type="interaction">
    <interactant intactId="EBI-8638294">
        <id>Q9NUH8</id>
    </interactant>
    <interactant intactId="EBI-721517">
        <id>Q99519</id>
        <label>NEU1</label>
    </interactant>
    <organismsDiffer>false</organismsDiffer>
    <experiments>3</experiments>
</comment>
<comment type="interaction">
    <interactant intactId="EBI-8638294">
        <id>Q9NUH8</id>
    </interactant>
    <interactant intactId="EBI-2802124">
        <id>Q92982</id>
        <label>NINJ1</label>
    </interactant>
    <organismsDiffer>false</organismsDiffer>
    <experiments>3</experiments>
</comment>
<comment type="interaction">
    <interactant intactId="EBI-8638294">
        <id>Q9NUH8</id>
    </interactant>
    <interactant intactId="EBI-10317425">
        <id>Q9NZG7</id>
        <label>NINJ2</label>
    </interactant>
    <organismsDiffer>false</organismsDiffer>
    <experiments>3</experiments>
</comment>
<comment type="interaction">
    <interactant intactId="EBI-8638294">
        <id>Q9NUH8</id>
    </interactant>
    <interactant intactId="EBI-10252783">
        <id>Q6P499</id>
        <label>NIPAL3</label>
    </interactant>
    <organismsDiffer>false</organismsDiffer>
    <experiments>3</experiments>
</comment>
<comment type="interaction">
    <interactant intactId="EBI-8638294">
        <id>Q9NUH8</id>
    </interactant>
    <interactant intactId="EBI-12051377">
        <id>Q8N912</id>
        <label>NRAC</label>
    </interactant>
    <organismsDiffer>false</organismsDiffer>
    <experiments>3</experiments>
</comment>
<comment type="interaction">
    <interactant intactId="EBI-8638294">
        <id>Q9NUH8</id>
    </interactant>
    <interactant intactId="EBI-1054848">
        <id>Q9P0S3</id>
        <label>ORMDL1</label>
    </interactant>
    <organismsDiffer>false</organismsDiffer>
    <experiments>3</experiments>
</comment>
<comment type="interaction">
    <interactant intactId="EBI-8638294">
        <id>Q9NUH8</id>
    </interactant>
    <interactant intactId="EBI-6916492">
        <id>Q9NUU6</id>
        <label>OTULINL</label>
    </interactant>
    <organismsDiffer>false</organismsDiffer>
    <experiments>3</experiments>
</comment>
<comment type="interaction">
    <interactant intactId="EBI-8638294">
        <id>Q9NUH8</id>
    </interactant>
    <interactant intactId="EBI-2559100">
        <id>O75459</id>
        <label>PAGE1</label>
    </interactant>
    <organismsDiffer>false</organismsDiffer>
    <experiments>3</experiments>
</comment>
<comment type="interaction">
    <interactant intactId="EBI-8638294">
        <id>Q9NUH8</id>
    </interactant>
    <interactant intactId="EBI-723160">
        <id>Q86YL7</id>
        <label>PDPN</label>
    </interactant>
    <organismsDiffer>false</organismsDiffer>
    <experiments>3</experiments>
</comment>
<comment type="interaction">
    <interactant intactId="EBI-8638294">
        <id>Q9NUH8</id>
    </interactant>
    <interactant intactId="EBI-716063">
        <id>Q13113</id>
        <label>PDZK1IP1</label>
    </interactant>
    <organismsDiffer>false</organismsDiffer>
    <experiments>3</experiments>
</comment>
<comment type="interaction">
    <interactant intactId="EBI-8638294">
        <id>Q9NUH8</id>
    </interactant>
    <interactant intactId="EBI-17284886">
        <id>Q96HA9</id>
        <label>PEX11G</label>
    </interactant>
    <organismsDiffer>false</organismsDiffer>
    <experiments>3</experiments>
</comment>
<comment type="interaction">
    <interactant intactId="EBI-8638294">
        <id>Q9NUH8</id>
    </interactant>
    <interactant intactId="EBI-17180304">
        <id>Q07326</id>
        <label>PIGF</label>
    </interactant>
    <organismsDiffer>false</organismsDiffer>
    <experiments>3</experiments>
</comment>
<comment type="interaction">
    <interactant intactId="EBI-8638294">
        <id>Q9NUH8</id>
    </interactant>
    <interactant intactId="EBI-3919291">
        <id>Q9Y342</id>
        <label>PLLP</label>
    </interactant>
    <organismsDiffer>false</organismsDiffer>
    <experiments>3</experiments>
</comment>
<comment type="interaction">
    <interactant intactId="EBI-8638294">
        <id>Q9NUH8</id>
    </interactant>
    <interactant intactId="EBI-12188331">
        <id>P60201-2</id>
        <label>PLP1</label>
    </interactant>
    <organismsDiffer>false</organismsDiffer>
    <experiments>3</experiments>
</comment>
<comment type="interaction">
    <interactant intactId="EBI-8638294">
        <id>Q9NUH8</id>
    </interactant>
    <interactant intactId="EBI-608347">
        <id>Q04941</id>
        <label>PLP2</label>
    </interactant>
    <organismsDiffer>false</organismsDiffer>
    <experiments>3</experiments>
</comment>
<comment type="interaction">
    <interactant intactId="EBI-8638294">
        <id>Q9NUH8</id>
    </interactant>
    <interactant intactId="EBI-2845982">
        <id>Q01453</id>
        <label>PMP22</label>
    </interactant>
    <organismsDiffer>false</organismsDiffer>
    <experiments>3</experiments>
</comment>
<comment type="interaction">
    <interactant intactId="EBI-8638294">
        <id>Q9NUH8</id>
    </interactant>
    <interactant intactId="EBI-8652812">
        <id>P54315</id>
        <label>PNLIPRP1</label>
    </interactant>
    <organismsDiffer>false</organismsDiffer>
    <experiments>3</experiments>
</comment>
<comment type="interaction">
    <interactant intactId="EBI-8638294">
        <id>Q9NUH8</id>
    </interactant>
    <interactant intactId="EBI-2506064">
        <id>O60831</id>
        <label>PRAF2</label>
    </interactant>
    <organismsDiffer>false</organismsDiffer>
    <experiments>3</experiments>
</comment>
<comment type="interaction">
    <interactant intactId="EBI-8638294">
        <id>Q9NUH8</id>
    </interactant>
    <interactant intactId="EBI-7199479">
        <id>Q8WUK0</id>
        <label>PTPMT1</label>
    </interactant>
    <organismsDiffer>false</organismsDiffer>
    <experiments>3</experiments>
</comment>
<comment type="interaction">
    <interactant intactId="EBI-8638294">
        <id>Q9NUH8</id>
    </interactant>
    <interactant intactId="EBI-712367">
        <id>Q9UI14</id>
        <label>RABAC1</label>
    </interactant>
    <organismsDiffer>false</organismsDiffer>
    <experiments>3</experiments>
</comment>
<comment type="interaction">
    <interactant intactId="EBI-8638294">
        <id>Q9NUH8</id>
    </interactant>
    <interactant intactId="EBI-17249212">
        <id>Q02161-2</id>
        <label>RHD</label>
    </interactant>
    <organismsDiffer>false</organismsDiffer>
    <experiments>3</experiments>
</comment>
<comment type="interaction">
    <interactant intactId="EBI-8638294">
        <id>Q9NUH8</id>
    </interactant>
    <interactant intactId="EBI-1396563">
        <id>Q8IXI1</id>
        <label>RHOT2</label>
    </interactant>
    <organismsDiffer>false</organismsDiffer>
    <experiments>3</experiments>
</comment>
<comment type="interaction">
    <interactant intactId="EBI-8638294">
        <id>Q9NUH8</id>
    </interactant>
    <interactant intactId="EBI-4290665">
        <id>Q9Y6B6</id>
        <label>SAR1B</label>
    </interactant>
    <organismsDiffer>false</organismsDiffer>
    <experiments>3</experiments>
</comment>
<comment type="interaction">
    <interactant intactId="EBI-8638294">
        <id>Q9NUH8</id>
    </interactant>
    <interactant intactId="EBI-2695784">
        <id>Q8TAC9</id>
        <label>SCAMP5</label>
    </interactant>
    <organismsDiffer>false</organismsDiffer>
    <experiments>3</experiments>
</comment>
<comment type="interaction">
    <interactant intactId="EBI-8638294">
        <id>Q9NUH8</id>
    </interactant>
    <interactant intactId="EBI-17247926">
        <id>Q9NY72</id>
        <label>SCN3B</label>
    </interactant>
    <organismsDiffer>false</organismsDiffer>
    <experiments>3</experiments>
</comment>
<comment type="interaction">
    <interactant intactId="EBI-8638294">
        <id>Q9NUH8</id>
    </interactant>
    <interactant intactId="EBI-10189029">
        <id>O75711</id>
        <label>SCRG1</label>
    </interactant>
    <organismsDiffer>false</organismsDiffer>
    <experiments>3</experiments>
</comment>
<comment type="interaction">
    <interactant intactId="EBI-8638294">
        <id>Q9NUH8</id>
    </interactant>
    <interactant intactId="EBI-2115181">
        <id>O75920</id>
        <label>SERF1B</label>
    </interactant>
    <organismsDiffer>false</organismsDiffer>
    <experiments>3</experiments>
</comment>
<comment type="interaction">
    <interactant intactId="EBI-8638294">
        <id>Q9NUH8</id>
    </interactant>
    <interactant intactId="EBI-10329948">
        <id>Q9Y6X1</id>
        <label>SERP1</label>
    </interactant>
    <organismsDiffer>false</organismsDiffer>
    <experiments>3</experiments>
</comment>
<comment type="interaction">
    <interactant intactId="EBI-8638294">
        <id>Q9NUH8</id>
    </interactant>
    <interactant intactId="EBI-749270">
        <id>Q8N6R1</id>
        <label>SERP2</label>
    </interactant>
    <organismsDiffer>false</organismsDiffer>
    <experiments>3</experiments>
</comment>
<comment type="interaction">
    <interactant intactId="EBI-8638294">
        <id>Q9NUH8</id>
    </interactant>
    <interactant intactId="EBI-2854842">
        <id>Q8WV19</id>
        <label>SFT2D1</label>
    </interactant>
    <organismsDiffer>false</organismsDiffer>
    <experiments>3</experiments>
</comment>
<comment type="interaction">
    <interactant intactId="EBI-8638294">
        <id>Q9NUH8</id>
    </interactant>
    <interactant intactId="EBI-4402330">
        <id>O95562</id>
        <label>SFT2D2</label>
    </interactant>
    <organismsDiffer>false</organismsDiffer>
    <experiments>3</experiments>
</comment>
<comment type="interaction">
    <interactant intactId="EBI-8638294">
        <id>Q9NUH8</id>
    </interactant>
    <interactant intactId="EBI-355861">
        <id>Q9H9B4</id>
        <label>SFXN1</label>
    </interactant>
    <organismsDiffer>false</organismsDiffer>
    <experiments>3</experiments>
</comment>
<comment type="interaction">
    <interactant intactId="EBI-8638294">
        <id>Q9NUH8</id>
    </interactant>
    <interactant intactId="EBI-6381136">
        <id>Q96NB2</id>
        <label>SFXN2</label>
    </interactant>
    <organismsDiffer>false</organismsDiffer>
    <experiments>3</experiments>
</comment>
<comment type="interaction">
    <interactant intactId="EBI-8638294">
        <id>Q9NUH8</id>
    </interactant>
    <interactant intactId="EBI-1171999">
        <id>Q9BWM7</id>
        <label>SFXN3</label>
    </interactant>
    <organismsDiffer>false</organismsDiffer>
    <experiments>3</experiments>
</comment>
<comment type="interaction">
    <interactant intactId="EBI-8638294">
        <id>Q9NUH8</id>
    </interactant>
    <interactant intactId="EBI-17858931">
        <id>Q8TF71</id>
        <label>SLC16A10</label>
    </interactant>
    <organismsDiffer>false</organismsDiffer>
    <experiments>3</experiments>
</comment>
<comment type="interaction">
    <interactant intactId="EBI-8638294">
        <id>Q9NUH8</id>
    </interactant>
    <interactant intactId="EBI-12243266">
        <id>Q7RTY0</id>
        <label>SLC16A13</label>
    </interactant>
    <organismsDiffer>false</organismsDiffer>
    <experiments>3</experiments>
</comment>
<comment type="interaction">
    <interactant intactId="EBI-8638294">
        <id>Q9NUH8</id>
    </interactant>
    <interactant intactId="EBI-17595455">
        <id>P54219-3</id>
        <label>SLC18A1</label>
    </interactant>
    <organismsDiffer>false</organismsDiffer>
    <experiments>3</experiments>
</comment>
<comment type="interaction">
    <interactant intactId="EBI-8638294">
        <id>Q9NUH8</id>
    </interactant>
    <interactant intactId="EBI-3923779">
        <id>Q9BZV2</id>
        <label>SLC19A3</label>
    </interactant>
    <organismsDiffer>false</organismsDiffer>
    <experiments>3</experiments>
</comment>
<comment type="interaction">
    <interactant intactId="EBI-8638294">
        <id>Q9NUH8</id>
    </interactant>
    <interactant intactId="EBI-18004831">
        <id>Q9UGQ3</id>
        <label>SLC2A6</label>
    </interactant>
    <organismsDiffer>false</organismsDiffer>
    <experiments>3</experiments>
</comment>
<comment type="interaction">
    <interactant intactId="EBI-8638294">
        <id>Q9NUH8</id>
    </interactant>
    <interactant intactId="EBI-10294651">
        <id>Q99726</id>
        <label>SLC30A3</label>
    </interactant>
    <organismsDiffer>false</organismsDiffer>
    <experiments>3</experiments>
</comment>
<comment type="interaction">
    <interactant intactId="EBI-8638294">
        <id>Q9NUH8</id>
    </interactant>
    <interactant intactId="EBI-10262251">
        <id>Q8IWU4</id>
        <label>SLC30A8</label>
    </interactant>
    <organismsDiffer>false</organismsDiffer>
    <experiments>3</experiments>
</comment>
<comment type="interaction">
    <interactant intactId="EBI-8638294">
        <id>Q9NUH8</id>
    </interactant>
    <interactant intactId="EBI-12363689">
        <id>Q96G79</id>
        <label>SLC35A4</label>
    </interactant>
    <organismsDiffer>false</organismsDiffer>
    <experiments>3</experiments>
</comment>
<comment type="interaction">
    <interactant intactId="EBI-8638294">
        <id>Q9NUH8</id>
    </interactant>
    <interactant intactId="EBI-17295964">
        <id>Q9NQQ7-3</id>
        <label>SLC35C2</label>
    </interactant>
    <organismsDiffer>false</organismsDiffer>
    <experiments>3</experiments>
</comment>
<comment type="interaction">
    <interactant intactId="EBI-8638294">
        <id>Q9NUH8</id>
    </interactant>
    <interactant intactId="EBI-13389236">
        <id>Q7Z769</id>
        <label>SLC35E3</label>
    </interactant>
    <organismsDiffer>false</organismsDiffer>
    <experiments>3</experiments>
</comment>
<comment type="interaction">
    <interactant intactId="EBI-8638294">
        <id>Q9NUH8</id>
    </interactant>
    <interactant intactId="EBI-12867720">
        <id>Q6ICL7</id>
        <label>SLC35E4</label>
    </interactant>
    <organismsDiffer>false</organismsDiffer>
    <experiments>3</experiments>
</comment>
<comment type="interaction">
    <interactant intactId="EBI-8638294">
        <id>Q9NUH8</id>
    </interactant>
    <interactant intactId="EBI-13365456">
        <id>Q5T1Q4</id>
        <label>SLC35F1</label>
    </interactant>
    <organismsDiffer>false</organismsDiffer>
    <experiments>3</experiments>
</comment>
<comment type="interaction">
    <interactant intactId="EBI-8638294">
        <id>Q9NUH8</id>
    </interactant>
    <interactant intactId="EBI-713484">
        <id>Q8N357</id>
        <label>SLC35F6</label>
    </interactant>
    <organismsDiffer>false</organismsDiffer>
    <experiments>3</experiments>
</comment>
<comment type="interaction">
    <interactant intactId="EBI-8638294">
        <id>Q9NUH8</id>
    </interactant>
    <interactant intactId="EBI-13311257">
        <id>Q2M3R5</id>
        <label>SLC35G1</label>
    </interactant>
    <organismsDiffer>false</organismsDiffer>
    <experiments>3</experiments>
</comment>
<comment type="interaction">
    <interactant intactId="EBI-8638294">
        <id>Q9NUH8</id>
    </interactant>
    <interactant intactId="EBI-12898013">
        <id>Q9NP94</id>
        <label>SLC39A2</label>
    </interactant>
    <organismsDiffer>false</organismsDiffer>
    <experiments>3</experiments>
</comment>
<comment type="interaction">
    <interactant intactId="EBI-8638294">
        <id>Q9NUH8</id>
    </interactant>
    <interactant intactId="EBI-1051105">
        <id>Q92504</id>
        <label>SLC39A7</label>
    </interactant>
    <organismsDiffer>false</organismsDiffer>
    <experiments>3</experiments>
</comment>
<comment type="interaction">
    <interactant intactId="EBI-8638294">
        <id>Q9NUH8</id>
    </interactant>
    <interactant intactId="EBI-1222191">
        <id>Q6P1K1</id>
        <label>SLC48A1</label>
    </interactant>
    <organismsDiffer>false</organismsDiffer>
    <experiments>3</experiments>
</comment>
<comment type="interaction">
    <interactant intactId="EBI-8638294">
        <id>Q9NUH8</id>
    </interactant>
    <interactant intactId="EBI-13292283">
        <id>Q9UHI5</id>
        <label>SLC7A8</label>
    </interactant>
    <organismsDiffer>false</organismsDiffer>
    <experiments>3</experiments>
</comment>
<comment type="interaction">
    <interactant intactId="EBI-8638294">
        <id>Q9NUH8</id>
    </interactant>
    <interactant intactId="EBI-10226799">
        <id>Q0VAQ4</id>
        <label>SMAGP</label>
    </interactant>
    <organismsDiffer>false</organismsDiffer>
    <experiments>3</experiments>
</comment>
<comment type="interaction">
    <interactant intactId="EBI-8638294">
        <id>Q9NUH8</id>
    </interactant>
    <interactant intactId="EBI-12828299">
        <id>O60906</id>
        <label>SMPD2</label>
    </interactant>
    <organismsDiffer>false</organismsDiffer>
    <experiments>3</experiments>
</comment>
<comment type="interaction">
    <interactant intactId="EBI-8638294">
        <id>Q9NUH8</id>
    </interactant>
    <interactant intactId="EBI-3905171">
        <id>Q14534</id>
        <label>SQLE</label>
    </interactant>
    <organismsDiffer>false</organismsDiffer>
    <experiments>3</experiments>
</comment>
<comment type="interaction">
    <interactant intactId="EBI-8638294">
        <id>Q9NUH8</id>
    </interactant>
    <interactant intactId="EBI-12908338">
        <id>Q96JF0-2</id>
        <label>ST6GAL2</label>
    </interactant>
    <organismsDiffer>false</organismsDiffer>
    <experiments>3</experiments>
</comment>
<comment type="interaction">
    <interactant intactId="EBI-8638294">
        <id>Q9NUH8</id>
    </interactant>
    <interactant intactId="EBI-1211440">
        <id>P27105</id>
        <label>STOM</label>
    </interactant>
    <organismsDiffer>false</organismsDiffer>
    <experiments>3</experiments>
</comment>
<comment type="interaction">
    <interactant intactId="EBI-8638294">
        <id>Q9NUH8</id>
    </interactant>
    <interactant intactId="EBI-2691717">
        <id>Q86Y82</id>
        <label>STX12</label>
    </interactant>
    <organismsDiffer>false</organismsDiffer>
    <experiments>3</experiments>
</comment>
<comment type="interaction">
    <interactant intactId="EBI-8638294">
        <id>Q9NUH8</id>
    </interactant>
    <interactant intactId="EBI-1394295">
        <id>Q13277</id>
        <label>STX3</label>
    </interactant>
    <organismsDiffer>false</organismsDiffer>
    <experiments>3</experiments>
</comment>
<comment type="interaction">
    <interactant intactId="EBI-8638294">
        <id>Q9NUH8</id>
    </interactant>
    <interactant intactId="EBI-2695795">
        <id>O43752</id>
        <label>STX6</label>
    </interactant>
    <organismsDiffer>false</organismsDiffer>
    <experiments>3</experiments>
</comment>
<comment type="interaction">
    <interactant intactId="EBI-8638294">
        <id>Q9NUH8</id>
    </interactant>
    <interactant intactId="EBI-727240">
        <id>Q9UNK0</id>
        <label>STX8</label>
    </interactant>
    <organismsDiffer>false</organismsDiffer>
    <experiments>3</experiments>
</comment>
<comment type="interaction">
    <interactant intactId="EBI-8638294">
        <id>Q9NUH8</id>
    </interactant>
    <interactant intactId="EBI-17962797">
        <id>Q9BXA5</id>
        <label>SUCNR1</label>
    </interactant>
    <organismsDiffer>false</organismsDiffer>
    <experiments>3</experiments>
</comment>
<comment type="interaction">
    <interactant intactId="EBI-8638294">
        <id>Q9NUH8</id>
    </interactant>
    <interactant intactId="EBI-12187159">
        <id>O43759-2</id>
        <label>SYNGR1</label>
    </interactant>
    <organismsDiffer>false</organismsDiffer>
    <experiments>3</experiments>
</comment>
<comment type="interaction">
    <interactant intactId="EBI-8638294">
        <id>Q9NUH8</id>
    </interactant>
    <interactant intactId="EBI-1049004">
        <id>P57105</id>
        <label>SYNJ2BP</label>
    </interactant>
    <organismsDiffer>false</organismsDiffer>
    <experiments>3</experiments>
</comment>
<comment type="interaction">
    <interactant intactId="EBI-8638294">
        <id>Q9NUH8</id>
    </interactant>
    <interactant intactId="EBI-747259">
        <id>Q03518</id>
        <label>TAP1</label>
    </interactant>
    <organismsDiffer>false</organismsDiffer>
    <experiments>3</experiments>
</comment>
<comment type="interaction">
    <interactant intactId="EBI-8638294">
        <id>Q9NUH8</id>
    </interactant>
    <interactant intactId="EBI-12847034">
        <id>P59542</id>
        <label>TAS2R19</label>
    </interactant>
    <organismsDiffer>false</organismsDiffer>
    <experiments>3</experiments>
</comment>
<comment type="interaction">
    <interactant intactId="EBI-8638294">
        <id>Q9NUH8</id>
    </interactant>
    <interactant intactId="EBI-9254454">
        <id>Q96BZ9</id>
        <label>TBC1D20</label>
    </interactant>
    <organismsDiffer>false</organismsDiffer>
    <experiments>3</experiments>
</comment>
<comment type="interaction">
    <interactant intactId="EBI-8638294">
        <id>Q9NUH8</id>
    </interactant>
    <interactant intactId="EBI-10278496">
        <id>Q53QW1</id>
        <label>TEX44</label>
    </interactant>
    <organismsDiffer>false</organismsDiffer>
    <experiments>3</experiments>
</comment>
<comment type="interaction">
    <interactant intactId="EBI-8638294">
        <id>Q9NUH8</id>
    </interactant>
    <interactant intactId="EBI-941422">
        <id>P07204</id>
        <label>THBD</label>
    </interactant>
    <organismsDiffer>false</organismsDiffer>
    <experiments>3</experiments>
</comment>
<comment type="interaction">
    <interactant intactId="EBI-8638294">
        <id>Q9NUH8</id>
    </interactant>
    <interactant intactId="EBI-1200494">
        <id>Q9Y584</id>
        <label>TIMM22</label>
    </interactant>
    <organismsDiffer>false</organismsDiffer>
    <experiments>3</experiments>
</comment>
<comment type="interaction">
    <interactant intactId="EBI-8638294">
        <id>Q9NUH8</id>
    </interactant>
    <interactant intactId="EBI-1047996">
        <id>O14925</id>
        <label>TIMM23</label>
    </interactant>
    <organismsDiffer>false</organismsDiffer>
    <experiments>3</experiments>
</comment>
<comment type="interaction">
    <interactant intactId="EBI-8638294">
        <id>Q9NUH8</id>
    </interactant>
    <interactant intactId="EBI-6268651">
        <id>Q9NPL8</id>
        <label>TIMMDC1</label>
    </interactant>
    <organismsDiffer>false</organismsDiffer>
    <experiments>3</experiments>
</comment>
<comment type="interaction">
    <interactant intactId="EBI-8638294">
        <id>Q9NUH8</id>
    </interactant>
    <interactant intactId="EBI-11337932">
        <id>Q96CP7</id>
        <label>TLCD1</label>
    </interactant>
    <organismsDiffer>false</organismsDiffer>
    <experiments>3</experiments>
</comment>
<comment type="interaction">
    <interactant intactId="EBI-8638294">
        <id>Q9NUH8</id>
    </interactant>
    <interactant intactId="EBI-8650934">
        <id>P48230</id>
        <label>TM4SF4</label>
    </interactant>
    <organismsDiffer>false</organismsDiffer>
    <experiments>3</experiments>
</comment>
<comment type="interaction">
    <interactant intactId="EBI-8638294">
        <id>Q9NUH8</id>
    </interactant>
    <interactant intactId="EBI-723946">
        <id>P17152</id>
        <label>TMEM11</label>
    </interactant>
    <organismsDiffer>false</organismsDiffer>
    <experiments>3</experiments>
</comment>
<comment type="interaction">
    <interactant intactId="EBI-8638294">
        <id>Q9NUH8</id>
    </interactant>
    <interactant intactId="EBI-727322">
        <id>Q9BXJ8</id>
        <label>TMEM120A</label>
    </interactant>
    <organismsDiffer>false</organismsDiffer>
    <experiments>3</experiments>
</comment>
<comment type="interaction">
    <interactant intactId="EBI-8638294">
        <id>Q9NUH8</id>
    </interactant>
    <interactant intactId="EBI-10171534">
        <id>A0PK00</id>
        <label>TMEM120B</label>
    </interactant>
    <organismsDiffer>false</organismsDiffer>
    <experiments>3</experiments>
</comment>
<comment type="interaction">
    <interactant intactId="EBI-8638294">
        <id>Q9NUH8</id>
    </interactant>
    <interactant intactId="EBI-12155101">
        <id>Q9BTD3</id>
        <label>TMEM121</label>
    </interactant>
    <organismsDiffer>false</organismsDiffer>
    <experiments>3</experiments>
</comment>
<comment type="interaction">
    <interactant intactId="EBI-8638294">
        <id>Q9NUH8</id>
    </interactant>
    <interactant intactId="EBI-348587">
        <id>Q9BVK8</id>
        <label>TMEM147</label>
    </interactant>
    <organismsDiffer>false</organismsDiffer>
    <experiments>3</experiments>
</comment>
<comment type="interaction">
    <interactant intactId="EBI-8638294">
        <id>Q9NUH8</id>
    </interactant>
    <interactant intactId="EBI-2800360">
        <id>Q9Y6G1</id>
        <label>TMEM14A</label>
    </interactant>
    <organismsDiffer>false</organismsDiffer>
    <experiments>3</experiments>
</comment>
<comment type="interaction">
    <interactant intactId="EBI-8638294">
        <id>Q9NUH8</id>
    </interactant>
    <interactant intactId="EBI-8638294">
        <id>Q9NUH8</id>
        <label>TMEM14B</label>
    </interactant>
    <organismsDiffer>false</organismsDiffer>
    <experiments>3</experiments>
</comment>
<comment type="interaction">
    <interactant intactId="EBI-8638294">
        <id>Q9NUH8</id>
    </interactant>
    <interactant intactId="EBI-2339195">
        <id>Q9P0S9</id>
        <label>TMEM14C</label>
    </interactant>
    <organismsDiffer>false</organismsDiffer>
    <experiments>3</experiments>
</comment>
<comment type="interaction">
    <interactant intactId="EBI-8638294">
        <id>Q9NUH8</id>
    </interactant>
    <interactant intactId="EBI-13046724">
        <id>Q14656</id>
        <label>TMEM187</label>
    </interactant>
    <organismsDiffer>false</organismsDiffer>
    <experiments>3</experiments>
</comment>
<comment type="interaction">
    <interactant intactId="EBI-8638294">
        <id>Q9NUH8</id>
    </interactant>
    <interactant intactId="EBI-741829">
        <id>Q96HH6</id>
        <label>TMEM19</label>
    </interactant>
    <organismsDiffer>false</organismsDiffer>
    <experiments>3</experiments>
</comment>
<comment type="interaction">
    <interactant intactId="EBI-8638294">
        <id>Q9NUH8</id>
    </interactant>
    <interactant intactId="EBI-10265825">
        <id>Q8N511</id>
        <label>TMEM199</label>
    </interactant>
    <organismsDiffer>false</organismsDiffer>
    <experiments>3</experiments>
</comment>
<comment type="interaction">
    <interactant intactId="EBI-8638294">
        <id>Q9NUH8</id>
    </interactant>
    <interactant intactId="EBI-12274070">
        <id>Q969S6</id>
        <label>TMEM203</label>
    </interactant>
    <organismsDiffer>false</organismsDiffer>
    <experiments>3</experiments>
</comment>
<comment type="interaction">
    <interactant intactId="EBI-8638294">
        <id>Q9NUH8</id>
    </interactant>
    <interactant intactId="EBI-17963211">
        <id>Q6QAJ8</id>
        <label>TMEM220</label>
    </interactant>
    <organismsDiffer>false</organismsDiffer>
    <experiments>3</experiments>
</comment>
<comment type="interaction">
    <interactant intactId="EBI-8638294">
        <id>Q9NUH8</id>
    </interactant>
    <interactant intactId="EBI-347385">
        <id>Q9H0R3</id>
        <label>TMEM222</label>
    </interactant>
    <organismsDiffer>false</organismsDiffer>
    <experiments>3</experiments>
</comment>
<comment type="interaction">
    <interactant intactId="EBI-8638294">
        <id>Q9NUH8</id>
    </interactant>
    <interactant intactId="EBI-12195227">
        <id>Q8NBD8</id>
        <label>TMEM229B</label>
    </interactant>
    <organismsDiffer>false</organismsDiffer>
    <experiments>3</experiments>
</comment>
<comment type="interaction">
    <interactant intactId="EBI-8638294">
        <id>Q9NUH8</id>
    </interactant>
    <interactant intactId="EBI-12887458">
        <id>Q9BU79</id>
        <label>TMEM243</label>
    </interactant>
    <organismsDiffer>false</organismsDiffer>
    <experiments>3</experiments>
</comment>
<comment type="interaction">
    <interactant intactId="EBI-8638294">
        <id>Q9NUH8</id>
    </interactant>
    <interactant intactId="EBI-11956809">
        <id>Q8TBM7</id>
        <label>TMEM254</label>
    </interactant>
    <organismsDiffer>false</organismsDiffer>
    <experiments>3</experiments>
</comment>
<comment type="interaction">
    <interactant intactId="EBI-8638294">
        <id>Q9NUH8</id>
    </interactant>
    <interactant intactId="EBI-2870087">
        <id>Q8WV15</id>
        <label>TMEM255B</label>
    </interactant>
    <organismsDiffer>false</organismsDiffer>
    <experiments>3</experiments>
</comment>
<comment type="interaction">
    <interactant intactId="EBI-8638294">
        <id>Q9NUH8</id>
    </interactant>
    <interactant intactId="EBI-17555467">
        <id>Q0VDI3</id>
        <label>TMEM267</label>
    </interactant>
    <organismsDiffer>false</organismsDiffer>
    <experiments>3</experiments>
</comment>
<comment type="interaction">
    <interactant intactId="EBI-8638294">
        <id>Q9NUH8</id>
    </interactant>
    <interactant intactId="EBI-12038591">
        <id>Q69YG0</id>
        <label>TMEM42</label>
    </interactant>
    <organismsDiffer>false</organismsDiffer>
    <experiments>3</experiments>
</comment>
<comment type="interaction">
    <interactant intactId="EBI-8638294">
        <id>Q9NUH8</id>
    </interactant>
    <interactant intactId="EBI-12903814">
        <id>O95807</id>
        <label>TMEM50A</label>
    </interactant>
    <organismsDiffer>false</organismsDiffer>
    <experiments>3</experiments>
</comment>
<comment type="interaction">
    <interactant intactId="EBI-8638294">
        <id>Q9NUH8</id>
    </interactant>
    <interactant intactId="EBI-12366453">
        <id>P56557</id>
        <label>TMEM50B</label>
    </interactant>
    <organismsDiffer>false</organismsDiffer>
    <experiments>3</experiments>
</comment>
<comment type="interaction">
    <interactant intactId="EBI-8638294">
        <id>Q9NUH8</id>
    </interactant>
    <interactant intactId="EBI-726044">
        <id>Q9NW97</id>
        <label>TMEM51</label>
    </interactant>
    <organismsDiffer>false</organismsDiffer>
    <experiments>3</experiments>
</comment>
<comment type="interaction">
    <interactant intactId="EBI-8638294">
        <id>Q9NUH8</id>
    </interactant>
    <interactant intactId="EBI-2852148">
        <id>Q9H2L4</id>
        <label>TMEM60</label>
    </interactant>
    <organismsDiffer>false</organismsDiffer>
    <experiments>3</experiments>
</comment>
<comment type="interaction">
    <interactant intactId="EBI-8638294">
        <id>Q9NUH8</id>
    </interactant>
    <interactant intactId="EBI-17963363">
        <id>Q5SWH9</id>
        <label>TMEM69</label>
    </interactant>
    <organismsDiffer>false</organismsDiffer>
    <experiments>3</experiments>
</comment>
<comment type="interaction">
    <interactant intactId="EBI-8638294">
        <id>Q9NUH8</id>
    </interactant>
    <interactant intactId="EBI-12111910">
        <id>Q5BJF2</id>
        <label>TMEM97</label>
    </interactant>
    <organismsDiffer>false</organismsDiffer>
    <experiments>3</experiments>
</comment>
<comment type="interaction">
    <interactant intactId="EBI-8638294">
        <id>Q9NUH8</id>
    </interactant>
    <interactant intactId="EBI-11425701">
        <id>Q9BVT8</id>
        <label>TMUB1</label>
    </interactant>
    <organismsDiffer>false</organismsDiffer>
    <experiments>3</experiments>
</comment>
<comment type="interaction">
    <interactant intactId="EBI-8638294">
        <id>Q9NUH8</id>
    </interactant>
    <interactant intactId="EBI-6447886">
        <id>Q9Y320</id>
        <label>TMX2</label>
    </interactant>
    <organismsDiffer>false</organismsDiffer>
    <experiments>3</experiments>
</comment>
<comment type="interaction">
    <interactant intactId="EBI-8638294">
        <id>Q9NUH8</id>
    </interactant>
    <interactant intactId="EBI-10826510">
        <id>Q96B49</id>
        <label>TOMM6</label>
    </interactant>
    <organismsDiffer>false</organismsDiffer>
    <experiments>3</experiments>
</comment>
<comment type="interaction">
    <interactant intactId="EBI-8638294">
        <id>Q9NUH8</id>
    </interactant>
    <interactant intactId="EBI-3914288">
        <id>O60636</id>
        <label>TSPAN2</label>
    </interactant>
    <organismsDiffer>false</organismsDiffer>
    <experiments>3</experiments>
</comment>
<comment type="interaction">
    <interactant intactId="EBI-8638294">
        <id>Q9NUH8</id>
    </interactant>
    <interactant intactId="EBI-6623146">
        <id>P30536</id>
        <label>TSPO</label>
    </interactant>
    <organismsDiffer>false</organismsDiffer>
    <experiments>3</experiments>
</comment>
<comment type="interaction">
    <interactant intactId="EBI-8638294">
        <id>Q9NUH8</id>
    </interactant>
    <interactant intactId="EBI-11343401">
        <id>Q9NYZ1</id>
        <label>TVP23B</label>
    </interactant>
    <organismsDiffer>false</organismsDiffer>
    <experiments>3</experiments>
</comment>
<comment type="interaction">
    <interactant intactId="EBI-8638294">
        <id>Q9NUH8</id>
    </interactant>
    <interactant intactId="EBI-988826">
        <id>Q9Y385</id>
        <label>UBE2J1</label>
    </interactant>
    <organismsDiffer>false</organismsDiffer>
    <experiments>3</experiments>
</comment>
<comment type="interaction">
    <interactant intactId="EBI-8638294">
        <id>Q9NUH8</id>
    </interactant>
    <interactant intactId="EBI-2340110">
        <id>Q8N2K1</id>
        <label>UBE2J2</label>
    </interactant>
    <organismsDiffer>false</organismsDiffer>
    <experiments>3</experiments>
</comment>
<comment type="interaction">
    <interactant intactId="EBI-8638294">
        <id>Q9NUH8</id>
    </interactant>
    <interactant intactId="EBI-11026619">
        <id>Q05086-3</id>
        <label>UBE3A</label>
    </interactant>
    <organismsDiffer>false</organismsDiffer>
    <experiments>3</experiments>
</comment>
<comment type="interaction">
    <interactant intactId="EBI-8638294">
        <id>Q9NUH8</id>
    </interactant>
    <interactant intactId="EBI-2819725">
        <id>Q9Y5Z9</id>
        <label>UBIAD1</label>
    </interactant>
    <organismsDiffer>false</organismsDiffer>
    <experiments>3</experiments>
</comment>
<comment type="interaction">
    <interactant intactId="EBI-8638294">
        <id>Q9NUH8</id>
    </interactant>
    <interactant intactId="EBI-1993850">
        <id>O00124</id>
        <label>UBXN8</label>
    </interactant>
    <organismsDiffer>false</organismsDiffer>
    <experiments>3</experiments>
</comment>
<comment type="interaction">
    <interactant intactId="EBI-8638294">
        <id>Q9NUH8</id>
    </interactant>
    <interactant intactId="EBI-7601760">
        <id>Q53HI1</id>
        <label>UNC50</label>
    </interactant>
    <organismsDiffer>false</organismsDiffer>
    <experiments>3</experiments>
</comment>
<comment type="interaction">
    <interactant intactId="EBI-8638294">
        <id>Q9NUH8</id>
    </interactant>
    <interactant intactId="EBI-13356252">
        <id>Q86WB7-2</id>
        <label>UNC93A</label>
    </interactant>
    <organismsDiffer>false</organismsDiffer>
    <experiments>3</experiments>
</comment>
<comment type="interaction">
    <interactant intactId="EBI-8638294">
        <id>Q9NUH8</id>
    </interactant>
    <interactant intactId="EBI-12097582">
        <id>P23763-3</id>
        <label>VAMP1</label>
    </interactant>
    <organismsDiffer>false</organismsDiffer>
    <experiments>3</experiments>
</comment>
<comment type="interaction">
    <interactant intactId="EBI-8638294">
        <id>Q9NUH8</id>
    </interactant>
    <interactant intactId="EBI-10191195">
        <id>O95183</id>
        <label>VAMP5</label>
    </interactant>
    <organismsDiffer>false</organismsDiffer>
    <experiments>3</experiments>
</comment>
<comment type="interaction">
    <interactant intactId="EBI-8638294">
        <id>Q9NUH8</id>
    </interactant>
    <interactant intactId="EBI-1207615">
        <id>Q86Y07</id>
        <label>VRK2</label>
    </interactant>
    <organismsDiffer>false</organismsDiffer>
    <experiments>3</experiments>
</comment>
<comment type="interaction">
    <interactant intactId="EBI-8638294">
        <id>Q9NUH8</id>
    </interactant>
    <interactant intactId="EBI-723716">
        <id>Q9UEU0</id>
        <label>VTI1B</label>
    </interactant>
    <organismsDiffer>false</organismsDiffer>
    <experiments>3</experiments>
</comment>
<comment type="interaction">
    <interactant intactId="EBI-8638294">
        <id>Q9NUH8</id>
    </interactant>
    <interactant intactId="EBI-2799703">
        <id>O95070</id>
        <label>YIF1A</label>
    </interactant>
    <organismsDiffer>false</organismsDiffer>
    <experiments>3</experiments>
</comment>
<comment type="interaction">
    <interactant intactId="EBI-8638294">
        <id>Q9NUH8</id>
    </interactant>
    <interactant intactId="EBI-7850136">
        <id>Q9Y548</id>
        <label>YIPF1</label>
    </interactant>
    <organismsDiffer>false</organismsDiffer>
    <experiments>3</experiments>
</comment>
<comment type="interaction">
    <interactant intactId="EBI-8638294">
        <id>Q9NUH8</id>
    </interactant>
    <interactant intactId="EBI-751204">
        <id>Q9BWQ6</id>
        <label>YIPF2</label>
    </interactant>
    <organismsDiffer>false</organismsDiffer>
    <experiments>3</experiments>
</comment>
<comment type="interaction">
    <interactant intactId="EBI-8638294">
        <id>Q9NUH8</id>
    </interactant>
    <interactant intactId="EBI-751253">
        <id>Q9BSR8</id>
        <label>YIPF4</label>
    </interactant>
    <organismsDiffer>false</organismsDiffer>
    <experiments>3</experiments>
</comment>
<comment type="interaction">
    <interactant intactId="EBI-8638294">
        <id>Q9NUH8</id>
    </interactant>
    <interactant intactId="EBI-751210">
        <id>Q96EC8</id>
        <label>YIPF6</label>
    </interactant>
    <organismsDiffer>false</organismsDiffer>
    <experiments>3</experiments>
</comment>
<comment type="interaction">
    <interactant intactId="EBI-8638294">
        <id>Q9NUH8</id>
    </interactant>
    <interactant intactId="EBI-17961574">
        <id>Q9H8X9</id>
        <label>ZDHHC11</label>
    </interactant>
    <organismsDiffer>false</organismsDiffer>
    <experiments>3</experiments>
</comment>
<comment type="interaction">
    <interactant intactId="EBI-8638294">
        <id>Q9NUH8</id>
    </interactant>
    <interactant intactId="EBI-10268111">
        <id>Q8N966</id>
        <label>ZDHHC22</label>
    </interactant>
    <organismsDiffer>false</organismsDiffer>
    <experiments>3</experiments>
</comment>
<comment type="interaction">
    <interactant intactId="EBI-8638294">
        <id>Q9NUH8</id>
    </interactant>
    <interactant intactId="EBI-10254561">
        <id>Q6UX98</id>
        <label>ZDHHC24</label>
    </interactant>
    <organismsDiffer>false</organismsDiffer>
    <experiments>3</experiments>
</comment>
<comment type="interaction">
    <interactant intactId="EBI-8638294">
        <id>Q9NUH8</id>
    </interactant>
    <interactant intactId="EBI-718439">
        <id>O95159</id>
        <label>ZFPL1</label>
    </interactant>
    <organismsDiffer>false</organismsDiffer>
    <experiments>3</experiments>
</comment>
<comment type="interaction">
    <interactant intactId="EBI-8638294">
        <id>Q9NUH8</id>
    </interactant>
    <interactant intactId="EBI-13387614">
        <id>A0A087WZY1</id>
    </interactant>
    <organismsDiffer>false</organismsDiffer>
    <experiments>3</experiments>
</comment>
<comment type="interaction">
    <interactant intactId="EBI-8638294">
        <id>Q9NUH8</id>
    </interactant>
    <interactant intactId="EBI-25475914">
        <id>P0DTD8</id>
        <label>7b</label>
    </interactant>
    <organismsDiffer>true</organismsDiffer>
    <experiments>3</experiments>
</comment>
<comment type="subcellular location">
    <subcellularLocation>
        <location evidence="3">Membrane</location>
        <topology evidence="1">Multi-pass membrane protein</topology>
    </subcellularLocation>
</comment>
<comment type="alternative products">
    <event type="alternative splicing"/>
    <isoform>
        <id>Q9NUH8-1</id>
        <name>1</name>
        <sequence type="displayed"/>
    </isoform>
    <isoform>
        <id>Q9NUH8-2</id>
        <name>2</name>
        <sequence type="described" ref="VSP_046899"/>
    </isoform>
</comment>
<comment type="tissue specificity">
    <text evidence="2">Mainly expressed in the outer subventricular zone (OSVZ) of the fetal brains.</text>
</comment>
<comment type="miscellaneous">
    <text evidence="2">When expressed in embryonic mouse neocortex, induces intermediate progenitor cells and outer radial glia expansion, cortical thickening and induces gyrification (PubMed:29033352).</text>
</comment>
<comment type="similarity">
    <text evidence="3">Belongs to the TMEM14 family.</text>
</comment>
<protein>
    <recommendedName>
        <fullName>Transmembrane protein 14B</fullName>
    </recommendedName>
</protein>
<gene>
    <name type="primary">TMEM14B</name>
</gene>
<organism>
    <name type="scientific">Homo sapiens</name>
    <name type="common">Human</name>
    <dbReference type="NCBI Taxonomy" id="9606"/>
    <lineage>
        <taxon>Eukaryota</taxon>
        <taxon>Metazoa</taxon>
        <taxon>Chordata</taxon>
        <taxon>Craniata</taxon>
        <taxon>Vertebrata</taxon>
        <taxon>Euteleostomi</taxon>
        <taxon>Mammalia</taxon>
        <taxon>Eutheria</taxon>
        <taxon>Euarchontoglires</taxon>
        <taxon>Primates</taxon>
        <taxon>Haplorrhini</taxon>
        <taxon>Catarrhini</taxon>
        <taxon>Hominidae</taxon>
        <taxon>Homo</taxon>
    </lineage>
</organism>
<accession>Q9NUH8</accession>
<accession>Q5THN7</accession>
<accession>Q5THN8</accession>
<accession>Q96IX7</accession>
<accession>Q9BVN8</accession>
<keyword id="KW-0025">Alternative splicing</keyword>
<keyword id="KW-0217">Developmental protein</keyword>
<keyword id="KW-0472">Membrane</keyword>
<keyword id="KW-0524">Neurogenesis</keyword>
<keyword id="KW-1185">Reference proteome</keyword>
<keyword id="KW-0812">Transmembrane</keyword>
<keyword id="KW-1133">Transmembrane helix</keyword>
<name>TM14B_HUMAN</name>
<sequence>MEKPLFPLVPLHWFGFGYTALVVSGGIVGYVKTGSVPSLAAGLLFGSLAGLGAYQLYQDPRNVWGFLAATSVTFVGVMGMRSYYYGKFMPVGLIAGASLLMAAKVGVRMLMTSD</sequence>
<reference key="1">
    <citation type="journal article" date="2003" name="Nature">
        <title>The DNA sequence and analysis of human chromosome 6.</title>
        <authorList>
            <person name="Mungall A.J."/>
            <person name="Palmer S.A."/>
            <person name="Sims S.K."/>
            <person name="Edwards C.A."/>
            <person name="Ashurst J.L."/>
            <person name="Wilming L."/>
            <person name="Jones M.C."/>
            <person name="Horton R."/>
            <person name="Hunt S.E."/>
            <person name="Scott C.E."/>
            <person name="Gilbert J.G.R."/>
            <person name="Clamp M.E."/>
            <person name="Bethel G."/>
            <person name="Milne S."/>
            <person name="Ainscough R."/>
            <person name="Almeida J.P."/>
            <person name="Ambrose K.D."/>
            <person name="Andrews T.D."/>
            <person name="Ashwell R.I.S."/>
            <person name="Babbage A.K."/>
            <person name="Bagguley C.L."/>
            <person name="Bailey J."/>
            <person name="Banerjee R."/>
            <person name="Barker D.J."/>
            <person name="Barlow K.F."/>
            <person name="Bates K."/>
            <person name="Beare D.M."/>
            <person name="Beasley H."/>
            <person name="Beasley O."/>
            <person name="Bird C.P."/>
            <person name="Blakey S.E."/>
            <person name="Bray-Allen S."/>
            <person name="Brook J."/>
            <person name="Brown A.J."/>
            <person name="Brown J.Y."/>
            <person name="Burford D.C."/>
            <person name="Burrill W."/>
            <person name="Burton J."/>
            <person name="Carder C."/>
            <person name="Carter N.P."/>
            <person name="Chapman J.C."/>
            <person name="Clark S.Y."/>
            <person name="Clark G."/>
            <person name="Clee C.M."/>
            <person name="Clegg S."/>
            <person name="Cobley V."/>
            <person name="Collier R.E."/>
            <person name="Collins J.E."/>
            <person name="Colman L.K."/>
            <person name="Corby N.R."/>
            <person name="Coville G.J."/>
            <person name="Culley K.M."/>
            <person name="Dhami P."/>
            <person name="Davies J."/>
            <person name="Dunn M."/>
            <person name="Earthrowl M.E."/>
            <person name="Ellington A.E."/>
            <person name="Evans K.A."/>
            <person name="Faulkner L."/>
            <person name="Francis M.D."/>
            <person name="Frankish A."/>
            <person name="Frankland J."/>
            <person name="French L."/>
            <person name="Garner P."/>
            <person name="Garnett J."/>
            <person name="Ghori M.J."/>
            <person name="Gilby L.M."/>
            <person name="Gillson C.J."/>
            <person name="Glithero R.J."/>
            <person name="Grafham D.V."/>
            <person name="Grant M."/>
            <person name="Gribble S."/>
            <person name="Griffiths C."/>
            <person name="Griffiths M.N.D."/>
            <person name="Hall R."/>
            <person name="Halls K.S."/>
            <person name="Hammond S."/>
            <person name="Harley J.L."/>
            <person name="Hart E.A."/>
            <person name="Heath P.D."/>
            <person name="Heathcott R."/>
            <person name="Holmes S.J."/>
            <person name="Howden P.J."/>
            <person name="Howe K.L."/>
            <person name="Howell G.R."/>
            <person name="Huckle E."/>
            <person name="Humphray S.J."/>
            <person name="Humphries M.D."/>
            <person name="Hunt A.R."/>
            <person name="Johnson C.M."/>
            <person name="Joy A.A."/>
            <person name="Kay M."/>
            <person name="Keenan S.J."/>
            <person name="Kimberley A.M."/>
            <person name="King A."/>
            <person name="Laird G.K."/>
            <person name="Langford C."/>
            <person name="Lawlor S."/>
            <person name="Leongamornlert D.A."/>
            <person name="Leversha M."/>
            <person name="Lloyd C.R."/>
            <person name="Lloyd D.M."/>
            <person name="Loveland J.E."/>
            <person name="Lovell J."/>
            <person name="Martin S."/>
            <person name="Mashreghi-Mohammadi M."/>
            <person name="Maslen G.L."/>
            <person name="Matthews L."/>
            <person name="McCann O.T."/>
            <person name="McLaren S.J."/>
            <person name="McLay K."/>
            <person name="McMurray A."/>
            <person name="Moore M.J.F."/>
            <person name="Mullikin J.C."/>
            <person name="Niblett D."/>
            <person name="Nickerson T."/>
            <person name="Novik K.L."/>
            <person name="Oliver K."/>
            <person name="Overton-Larty E.K."/>
            <person name="Parker A."/>
            <person name="Patel R."/>
            <person name="Pearce A.V."/>
            <person name="Peck A.I."/>
            <person name="Phillimore B.J.C.T."/>
            <person name="Phillips S."/>
            <person name="Plumb R.W."/>
            <person name="Porter K.M."/>
            <person name="Ramsey Y."/>
            <person name="Ranby S.A."/>
            <person name="Rice C.M."/>
            <person name="Ross M.T."/>
            <person name="Searle S.M."/>
            <person name="Sehra H.K."/>
            <person name="Sheridan E."/>
            <person name="Skuce C.D."/>
            <person name="Smith S."/>
            <person name="Smith M."/>
            <person name="Spraggon L."/>
            <person name="Squares S.L."/>
            <person name="Steward C.A."/>
            <person name="Sycamore N."/>
            <person name="Tamlyn-Hall G."/>
            <person name="Tester J."/>
            <person name="Theaker A.J."/>
            <person name="Thomas D.W."/>
            <person name="Thorpe A."/>
            <person name="Tracey A."/>
            <person name="Tromans A."/>
            <person name="Tubby B."/>
            <person name="Wall M."/>
            <person name="Wallis J.M."/>
            <person name="West A.P."/>
            <person name="White S.S."/>
            <person name="Whitehead S.L."/>
            <person name="Whittaker H."/>
            <person name="Wild A."/>
            <person name="Willey D.J."/>
            <person name="Wilmer T.E."/>
            <person name="Wood J.M."/>
            <person name="Wray P.W."/>
            <person name="Wyatt J.C."/>
            <person name="Young L."/>
            <person name="Younger R.M."/>
            <person name="Bentley D.R."/>
            <person name="Coulson A."/>
            <person name="Durbin R.M."/>
            <person name="Hubbard T."/>
            <person name="Sulston J.E."/>
            <person name="Dunham I."/>
            <person name="Rogers J."/>
            <person name="Beck S."/>
        </authorList>
    </citation>
    <scope>NUCLEOTIDE SEQUENCE [LARGE SCALE GENOMIC DNA]</scope>
</reference>
<reference key="2">
    <citation type="submission" date="2005-07" db="EMBL/GenBank/DDBJ databases">
        <authorList>
            <person name="Mural R.J."/>
            <person name="Istrail S."/>
            <person name="Sutton G.G."/>
            <person name="Florea L."/>
            <person name="Halpern A.L."/>
            <person name="Mobarry C.M."/>
            <person name="Lippert R."/>
            <person name="Walenz B."/>
            <person name="Shatkay H."/>
            <person name="Dew I."/>
            <person name="Miller J.R."/>
            <person name="Flanigan M.J."/>
            <person name="Edwards N.J."/>
            <person name="Bolanos R."/>
            <person name="Fasulo D."/>
            <person name="Halldorsson B.V."/>
            <person name="Hannenhalli S."/>
            <person name="Turner R."/>
            <person name="Yooseph S."/>
            <person name="Lu F."/>
            <person name="Nusskern D.R."/>
            <person name="Shue B.C."/>
            <person name="Zheng X.H."/>
            <person name="Zhong F."/>
            <person name="Delcher A.L."/>
            <person name="Huson D.H."/>
            <person name="Kravitz S.A."/>
            <person name="Mouchard L."/>
            <person name="Reinert K."/>
            <person name="Remington K.A."/>
            <person name="Clark A.G."/>
            <person name="Waterman M.S."/>
            <person name="Eichler E.E."/>
            <person name="Adams M.D."/>
            <person name="Hunkapiller M.W."/>
            <person name="Myers E.W."/>
            <person name="Venter J.C."/>
        </authorList>
    </citation>
    <scope>NUCLEOTIDE SEQUENCE [LARGE SCALE GENOMIC DNA]</scope>
</reference>
<reference key="3">
    <citation type="journal article" date="2004" name="Genome Res.">
        <title>The status, quality, and expansion of the NIH full-length cDNA project: the Mammalian Gene Collection (MGC).</title>
        <authorList>
            <consortium name="The MGC Project Team"/>
        </authorList>
    </citation>
    <scope>NUCLEOTIDE SEQUENCE [LARGE SCALE MRNA] (ISOFORM 1)</scope>
    <source>
        <tissue>Brain</tissue>
        <tissue>Liver</tissue>
        <tissue>Placenta</tissue>
        <tissue>Urinary bladder</tissue>
    </source>
</reference>
<reference key="4">
    <citation type="journal article" date="2017" name="Cell Stem Cell">
        <title>The primate-specific gene TMEM14B marks outer radial glia cells and promotes cortical expansion and folding.</title>
        <authorList>
            <person name="Liu J."/>
            <person name="Liu W."/>
            <person name="Yang L."/>
            <person name="Wu Q."/>
            <person name="Zhang H."/>
            <person name="Fang A."/>
            <person name="Li L."/>
            <person name="Xu X."/>
            <person name="Sun L."/>
            <person name="Zhang J."/>
            <person name="Tang F."/>
            <person name="Wang X."/>
        </authorList>
    </citation>
    <scope>FUNCTION</scope>
    <scope>INTERACTION WITH IQGAP1</scope>
    <scope>TISSUE SPECIFICITY</scope>
</reference>
<dbReference type="EMBL" id="AL024498">
    <property type="status" value="NOT_ANNOTATED_CDS"/>
    <property type="molecule type" value="Genomic_DNA"/>
</dbReference>
<dbReference type="EMBL" id="AL357497">
    <property type="status" value="NOT_ANNOTATED_CDS"/>
    <property type="molecule type" value="Genomic_DNA"/>
</dbReference>
<dbReference type="EMBL" id="CH471087">
    <property type="protein sequence ID" value="EAW55279.1"/>
    <property type="molecule type" value="Genomic_DNA"/>
</dbReference>
<dbReference type="EMBL" id="CH471087">
    <property type="protein sequence ID" value="EAW55281.1"/>
    <property type="molecule type" value="Genomic_DNA"/>
</dbReference>
<dbReference type="EMBL" id="BC001033">
    <property type="protein sequence ID" value="AAH01033.1"/>
    <property type="molecule type" value="mRNA"/>
</dbReference>
<dbReference type="EMBL" id="BC007080">
    <property type="protein sequence ID" value="AAH07080.1"/>
    <property type="molecule type" value="mRNA"/>
</dbReference>
<dbReference type="EMBL" id="BC013913">
    <property type="protein sequence ID" value="AAH13913.1"/>
    <property type="molecule type" value="mRNA"/>
</dbReference>
<dbReference type="EMBL" id="BC071660">
    <property type="protein sequence ID" value="AAH71660.1"/>
    <property type="molecule type" value="mRNA"/>
</dbReference>
<dbReference type="CCDS" id="CCDS4515.1">
    <molecule id="Q9NUH8-1"/>
</dbReference>
<dbReference type="CCDS" id="CCDS47372.1">
    <molecule id="Q9NUH8-2"/>
</dbReference>
<dbReference type="RefSeq" id="NP_001121183.1">
    <molecule id="Q9NUH8-2"/>
    <property type="nucleotide sequence ID" value="NM_001127711.3"/>
</dbReference>
<dbReference type="RefSeq" id="NP_001273413.1">
    <property type="nucleotide sequence ID" value="NM_001286484.1"/>
</dbReference>
<dbReference type="RefSeq" id="NP_112231.3">
    <molecule id="Q9NUH8-1"/>
    <property type="nucleotide sequence ID" value="NM_030969.4"/>
</dbReference>
<dbReference type="BioGRID" id="123603">
    <property type="interactions" value="281"/>
</dbReference>
<dbReference type="FunCoup" id="Q9NUH8">
    <property type="interactions" value="407"/>
</dbReference>
<dbReference type="IntAct" id="Q9NUH8">
    <property type="interactions" value="253"/>
</dbReference>
<dbReference type="MINT" id="Q9NUH8"/>
<dbReference type="STRING" id="9606.ENSP00000420658"/>
<dbReference type="TCDB" id="2.A.126.1.20">
    <property type="family name" value="the fatty acid exporter (fax) family"/>
</dbReference>
<dbReference type="iPTMnet" id="Q9NUH8"/>
<dbReference type="PhosphoSitePlus" id="Q9NUH8"/>
<dbReference type="BioMuta" id="TMEM14B"/>
<dbReference type="DMDM" id="27734593"/>
<dbReference type="MassIVE" id="Q9NUH8"/>
<dbReference type="PaxDb" id="9606-ENSP00000420658"/>
<dbReference type="PeptideAtlas" id="Q9NUH8"/>
<dbReference type="Pumba" id="Q9NUH8"/>
<dbReference type="TopDownProteomics" id="Q9NUH8-1">
    <molecule id="Q9NUH8-1"/>
</dbReference>
<dbReference type="Antibodypedia" id="52852">
    <property type="antibodies" value="28 antibodies from 6 providers"/>
</dbReference>
<dbReference type="DNASU" id="81853"/>
<dbReference type="Ensembl" id="ENST00000379530.7">
    <molecule id="Q9NUH8-2"/>
    <property type="protein sequence ID" value="ENSP00000368845.3"/>
    <property type="gene ID" value="ENSG00000137210.14"/>
</dbReference>
<dbReference type="Ensembl" id="ENST00000379542.10">
    <molecule id="Q9NUH8-1"/>
    <property type="protein sequence ID" value="ENSP00000368858.5"/>
    <property type="gene ID" value="ENSG00000137210.14"/>
</dbReference>
<dbReference type="GeneID" id="81853"/>
<dbReference type="KEGG" id="hsa:81853"/>
<dbReference type="MANE-Select" id="ENST00000379542.10">
    <property type="protein sequence ID" value="ENSP00000368858.5"/>
    <property type="RefSeq nucleotide sequence ID" value="NM_030969.5"/>
    <property type="RefSeq protein sequence ID" value="NP_112231.3"/>
</dbReference>
<dbReference type="UCSC" id="uc003mzk.5">
    <molecule id="Q9NUH8-1"/>
    <property type="organism name" value="human"/>
</dbReference>
<dbReference type="AGR" id="HGNC:21384"/>
<dbReference type="CTD" id="81853"/>
<dbReference type="DisGeNET" id="81853"/>
<dbReference type="GeneCards" id="TMEM14B"/>
<dbReference type="HGNC" id="HGNC:21384">
    <property type="gene designation" value="TMEM14B"/>
</dbReference>
<dbReference type="HPA" id="ENSG00000137210">
    <property type="expression patterns" value="Low tissue specificity"/>
</dbReference>
<dbReference type="MIM" id="619865">
    <property type="type" value="gene"/>
</dbReference>
<dbReference type="neXtProt" id="NX_Q9NUH8"/>
<dbReference type="OpenTargets" id="ENSG00000137210"/>
<dbReference type="PharmGKB" id="PA134964501"/>
<dbReference type="VEuPathDB" id="HostDB:ENSG00000137210"/>
<dbReference type="GeneTree" id="ENSGT00940000163914"/>
<dbReference type="HOGENOM" id="CLU_096652_4_0_1"/>
<dbReference type="InParanoid" id="Q9NUH8"/>
<dbReference type="OMA" id="IWAFGYA"/>
<dbReference type="OrthoDB" id="5620at2759"/>
<dbReference type="PAN-GO" id="Q9NUH8">
    <property type="GO annotations" value="2 GO annotations based on evolutionary models"/>
</dbReference>
<dbReference type="TreeFam" id="TF323345"/>
<dbReference type="PathwayCommons" id="Q9NUH8"/>
<dbReference type="SignaLink" id="Q9NUH8"/>
<dbReference type="BioGRID-ORCS" id="81853">
    <property type="hits" value="23 hits in 1144 CRISPR screens"/>
</dbReference>
<dbReference type="ChiTaRS" id="TMEM14B">
    <property type="organism name" value="human"/>
</dbReference>
<dbReference type="GenomeRNAi" id="81853"/>
<dbReference type="Pharos" id="Q9NUH8">
    <property type="development level" value="Tbio"/>
</dbReference>
<dbReference type="PRO" id="PR:Q9NUH8"/>
<dbReference type="Proteomes" id="UP000005640">
    <property type="component" value="Chromosome 6"/>
</dbReference>
<dbReference type="RNAct" id="Q9NUH8">
    <property type="molecule type" value="protein"/>
</dbReference>
<dbReference type="Bgee" id="ENSG00000137210">
    <property type="expression patterns" value="Expressed in oocyte and 193 other cell types or tissues"/>
</dbReference>
<dbReference type="ExpressionAtlas" id="Q9NUH8">
    <property type="expression patterns" value="baseline and differential"/>
</dbReference>
<dbReference type="GO" id="GO:0031966">
    <property type="term" value="C:mitochondrial membrane"/>
    <property type="evidence" value="ECO:0000318"/>
    <property type="project" value="GO_Central"/>
</dbReference>
<dbReference type="GO" id="GO:0042802">
    <property type="term" value="F:identical protein binding"/>
    <property type="evidence" value="ECO:0000353"/>
    <property type="project" value="IntAct"/>
</dbReference>
<dbReference type="GO" id="GO:0021987">
    <property type="term" value="P:cerebral cortex development"/>
    <property type="evidence" value="ECO:0000315"/>
    <property type="project" value="UniProtKB"/>
</dbReference>
<dbReference type="GO" id="GO:0061351">
    <property type="term" value="P:neural precursor cell proliferation"/>
    <property type="evidence" value="ECO:0000314"/>
    <property type="project" value="UniProtKB"/>
</dbReference>
<dbReference type="GO" id="GO:2000045">
    <property type="term" value="P:regulation of G1/S transition of mitotic cell cycle"/>
    <property type="evidence" value="ECO:0000314"/>
    <property type="project" value="UniProtKB"/>
</dbReference>
<dbReference type="GO" id="GO:0070453">
    <property type="term" value="P:regulation of heme biosynthetic process"/>
    <property type="evidence" value="ECO:0000318"/>
    <property type="project" value="GO_Central"/>
</dbReference>
<dbReference type="FunFam" id="1.10.10.1740:FF:000002">
    <property type="entry name" value="Transmembrane protein 14C"/>
    <property type="match status" value="1"/>
</dbReference>
<dbReference type="Gene3D" id="1.10.10.1740">
    <property type="entry name" value="Transmembrane protein 14-like"/>
    <property type="match status" value="1"/>
</dbReference>
<dbReference type="InterPro" id="IPR005349">
    <property type="entry name" value="TMEM14"/>
</dbReference>
<dbReference type="InterPro" id="IPR044890">
    <property type="entry name" value="TMEM14_sf"/>
</dbReference>
<dbReference type="PANTHER" id="PTHR12668">
    <property type="entry name" value="TRANSMEMBRANE PROTEIN 14, 15"/>
    <property type="match status" value="1"/>
</dbReference>
<dbReference type="PANTHER" id="PTHR12668:SF34">
    <property type="entry name" value="TRANSMEMBRANE PROTEIN 14B"/>
    <property type="match status" value="1"/>
</dbReference>
<dbReference type="Pfam" id="PF03647">
    <property type="entry name" value="Tmemb_14"/>
    <property type="match status" value="1"/>
</dbReference>
<feature type="chain" id="PRO_0000221172" description="Transmembrane protein 14B">
    <location>
        <begin position="1"/>
        <end position="114"/>
    </location>
</feature>
<feature type="transmembrane region" description="Helical" evidence="1">
    <location>
        <begin position="8"/>
        <end position="28"/>
    </location>
</feature>
<feature type="transmembrane region" description="Helical" evidence="1">
    <location>
        <begin position="34"/>
        <end position="54"/>
    </location>
</feature>
<feature type="transmembrane region" description="Helical" evidence="1">
    <location>
        <begin position="60"/>
        <end position="80"/>
    </location>
</feature>
<feature type="transmembrane region" description="Helical" evidence="1">
    <location>
        <begin position="83"/>
        <end position="103"/>
    </location>
</feature>
<feature type="splice variant" id="VSP_046899" description="In isoform 2." evidence="3">
    <location>
        <begin position="34"/>
        <end position="67"/>
    </location>
</feature>
<feature type="sequence conflict" description="In Ref. 3; AAH07080." evidence="3" ref="3">
    <original>P</original>
    <variation>S</variation>
    <location>
        <position position="37"/>
    </location>
</feature>
<feature type="sequence conflict" description="In Ref. 3; AAH01033." evidence="3" ref="3">
    <original>G</original>
    <variation>W</variation>
    <location>
        <position position="42"/>
    </location>
</feature>
<feature type="sequence conflict" description="In Ref. 3; AAH07080." evidence="3" ref="3">
    <original>Y</original>
    <variation>C</variation>
    <location>
        <position position="83"/>
    </location>
</feature>